<name>M21_HRSVB</name>
<gene>
    <name type="primary">M2-1</name>
</gene>
<comment type="function">
    <text evidence="1">Acts as a tetrameric transcription processivity factor that binds in a competitive manner to RNA and the phosphoprotein (P) to prevent premature termination during transcription. Transcription anti-terminator that enhances readthrough of intergenic junctions during viral transcription. Preferentially binds to poly(A)-rich sequences. Plays a role in the association of the matrix protein with the nucleocapsid, which initiates assembly and budding. Also, can activate host NF-kappa-B through association with host RELA.</text>
</comment>
<comment type="subunit">
    <text evidence="1">Homotetramer. The homotetramer interacts with RNA. Interacts with the phosphoprotein (P); this interaction is required for protein M2-1 function, localization in host inclusion bodies. Formation of a complex host PP1/M2-1/P allows P to target host PP1 phosphatase to the M2-1 substrate. Interacts with the nucleoprotein (N). Interacts with the matrix protein (M); this interaction directs M localization to cytoplasmic inclusions comprising viral proteins L, N, P, and M2-1 and mediates M association with the nucleocapsid. Interacts with host RELA. Interacts with host PABPC1 (via C-terminus).</text>
</comment>
<comment type="subcellular location">
    <subcellularLocation>
        <location evidence="1">Virion</location>
    </subcellularLocation>
    <subcellularLocation>
        <location evidence="1">Host cytoplasm</location>
    </subcellularLocation>
    <subcellularLocation>
        <location evidence="1">Host nucleus</location>
    </subcellularLocation>
    <text evidence="1">Localizes in cytoplasmic inclusion bodies substructures called inclusion bodies associated granules (IBAGs). Forms a layer between the matrix and nucleocapsid.</text>
</comment>
<comment type="domain">
    <text evidence="1">Contains a zinc-finger domain on its N-terminus essential for its anti-termination function. Contains an oligomerization domain. The central globular core is responsible for binding to RNA and phosphoprotein.</text>
</comment>
<comment type="PTM">
    <text evidence="1">Phosphorylated by host in infected cells. Only dephosphorylated M2-1 is competent for viral mRNA binding. Cyclic turnover of phosphorylation-dephosphorylation of M2-1 is required for efficient viral transcription.</text>
</comment>
<comment type="similarity">
    <text evidence="3">Belongs to the pneumoviridae M2-1 protein family.</text>
</comment>
<sequence>MSRRNPCKFEIRGHCLNGRRCHYSHNYFEWPPHALLVRQNFMLNKILKSMDKSIDTLSEISGAAELDRTEEYALGIVGVLESYIGSINNITKQSACVAMSKLLIEINSDDIKKLRDNEEPNSPKIRVYNTVISYIESNRKNNKQTIHLLKRLPADVLKKTIKNTLDIHKSIIISNPKESTVNDQNDQTKNNDITG</sequence>
<dbReference type="EMBL" id="AF013254">
    <property type="protein sequence ID" value="AAB82437.1"/>
    <property type="molecule type" value="Genomic_RNA"/>
</dbReference>
<dbReference type="EMBL" id="AF013255">
    <property type="protein sequence ID" value="AAB82447.1"/>
    <property type="molecule type" value="Genomic_RNA"/>
</dbReference>
<dbReference type="SMR" id="O42050"/>
<dbReference type="KEGG" id="vg:1489826"/>
<dbReference type="Proteomes" id="UP000002472">
    <property type="component" value="Segment"/>
</dbReference>
<dbReference type="Proteomes" id="UP000180717">
    <property type="component" value="Genome"/>
</dbReference>
<dbReference type="GO" id="GO:0030430">
    <property type="term" value="C:host cell cytoplasm"/>
    <property type="evidence" value="ECO:0007669"/>
    <property type="project" value="UniProtKB-SubCell"/>
</dbReference>
<dbReference type="GO" id="GO:0042025">
    <property type="term" value="C:host cell nucleus"/>
    <property type="evidence" value="ECO:0007669"/>
    <property type="project" value="UniProtKB-SubCell"/>
</dbReference>
<dbReference type="GO" id="GO:0044423">
    <property type="term" value="C:virion component"/>
    <property type="evidence" value="ECO:0007669"/>
    <property type="project" value="UniProtKB-KW"/>
</dbReference>
<dbReference type="GO" id="GO:0003723">
    <property type="term" value="F:RNA binding"/>
    <property type="evidence" value="ECO:0007669"/>
    <property type="project" value="UniProtKB-KW"/>
</dbReference>
<dbReference type="GO" id="GO:0005198">
    <property type="term" value="F:structural molecule activity"/>
    <property type="evidence" value="ECO:0007669"/>
    <property type="project" value="InterPro"/>
</dbReference>
<dbReference type="GO" id="GO:0008270">
    <property type="term" value="F:zinc ion binding"/>
    <property type="evidence" value="ECO:0007669"/>
    <property type="project" value="UniProtKB-KW"/>
</dbReference>
<dbReference type="GO" id="GO:0046782">
    <property type="term" value="P:regulation of viral transcription"/>
    <property type="evidence" value="ECO:0007669"/>
    <property type="project" value="InterPro"/>
</dbReference>
<dbReference type="GO" id="GO:0085033">
    <property type="term" value="P:symbiont-mediated activation of host NF-kappaB cascade"/>
    <property type="evidence" value="ECO:0007669"/>
    <property type="project" value="UniProtKB-KW"/>
</dbReference>
<dbReference type="GO" id="GO:0031564">
    <property type="term" value="P:transcription antitermination"/>
    <property type="evidence" value="ECO:0007669"/>
    <property type="project" value="UniProtKB-KW"/>
</dbReference>
<dbReference type="GO" id="GO:0019083">
    <property type="term" value="P:viral transcription"/>
    <property type="evidence" value="ECO:0007669"/>
    <property type="project" value="UniProtKB-KW"/>
</dbReference>
<dbReference type="Gene3D" id="1.20.120.1350">
    <property type="entry name" value="Pneumovirus matrix protein 2 (M2), zinc-binding domain"/>
    <property type="match status" value="1"/>
</dbReference>
<dbReference type="InterPro" id="IPR009452">
    <property type="entry name" value="Pneumovirus_M2-1"/>
</dbReference>
<dbReference type="InterPro" id="IPR000571">
    <property type="entry name" value="Znf_CCCH"/>
</dbReference>
<dbReference type="InterPro" id="IPR036855">
    <property type="entry name" value="Znf_CCCH_sf"/>
</dbReference>
<dbReference type="Pfam" id="PF06436">
    <property type="entry name" value="Pneumovirus_M2"/>
    <property type="match status" value="1"/>
</dbReference>
<dbReference type="PIRSF" id="PIRSF003913">
    <property type="entry name" value="Matrix_glycop-M2_paramyxo"/>
    <property type="match status" value="1"/>
</dbReference>
<dbReference type="SUPFAM" id="SSF90229">
    <property type="entry name" value="CCCH zinc finger"/>
    <property type="match status" value="1"/>
</dbReference>
<dbReference type="PROSITE" id="PS50103">
    <property type="entry name" value="ZF_C3H1"/>
    <property type="match status" value="1"/>
</dbReference>
<keyword id="KW-1074">Activation of host NF-kappa-B by virus</keyword>
<keyword id="KW-1035">Host cytoplasm</keyword>
<keyword id="KW-1048">Host nucleus</keyword>
<keyword id="KW-0945">Host-virus interaction</keyword>
<keyword id="KW-0479">Metal-binding</keyword>
<keyword id="KW-0597">Phosphoprotein</keyword>
<keyword id="KW-1185">Reference proteome</keyword>
<keyword id="KW-0694">RNA-binding</keyword>
<keyword id="KW-0804">Transcription</keyword>
<keyword id="KW-0889">Transcription antitermination</keyword>
<keyword id="KW-0805">Transcription regulation</keyword>
<keyword id="KW-1195">Viral transcription</keyword>
<keyword id="KW-0946">Virion</keyword>
<keyword id="KW-0862">Zinc</keyword>
<keyword id="KW-0863">Zinc-finger</keyword>
<reference key="1">
    <citation type="journal article" date="1997" name="Proc. Natl. Acad. Sci. U.S.A.">
        <title>Respiratory syncytial virus (RSV) SH and G proteins are not essential for viral replication in vitro: clinical evaluation and molecular characterization of a cold-passaged, attenuated RSV subgroup B mutant.</title>
        <authorList>
            <person name="Karron R.A."/>
            <person name="Buonagurio D.A."/>
            <person name="Georgiu A.F."/>
            <person name="Whitehead S.S."/>
            <person name="Adamus J.E."/>
            <person name="Clements-Mann M.L."/>
            <person name="Harris D.O."/>
            <person name="Randolph V.B."/>
            <person name="Udem S.A."/>
            <person name="Murphy B.R."/>
            <person name="Sidhu M.S."/>
        </authorList>
    </citation>
    <scope>NUCLEOTIDE SEQUENCE [GENOMIC RNA]</scope>
    <source>
        <strain>B1</strain>
    </source>
</reference>
<organism>
    <name type="scientific">Human respiratory syncytial virus B (strain B1)</name>
    <dbReference type="NCBI Taxonomy" id="79692"/>
    <lineage>
        <taxon>Viruses</taxon>
        <taxon>Riboviria</taxon>
        <taxon>Orthornavirae</taxon>
        <taxon>Negarnaviricota</taxon>
        <taxon>Haploviricotina</taxon>
        <taxon>Monjiviricetes</taxon>
        <taxon>Mononegavirales</taxon>
        <taxon>Pneumoviridae</taxon>
        <taxon>Orthopneumovirus</taxon>
        <taxon>Orthopneumovirus hominis</taxon>
    </lineage>
</organism>
<accession>O42050</accession>
<evidence type="ECO:0000250" key="1">
    <source>
        <dbReference type="UniProtKB" id="P04545"/>
    </source>
</evidence>
<evidence type="ECO:0000255" key="2">
    <source>
        <dbReference type="PROSITE-ProRule" id="PRU00723"/>
    </source>
</evidence>
<evidence type="ECO:0000305" key="3"/>
<feature type="chain" id="PRO_0000365791" description="Protein M2-1">
    <location>
        <begin position="1"/>
        <end position="195"/>
    </location>
</feature>
<feature type="zinc finger region" description="C3H1-type" evidence="1 2">
    <location>
        <begin position="1"/>
        <end position="28"/>
    </location>
</feature>
<feature type="region of interest" description="Oligomerization" evidence="1">
    <location>
        <begin position="32"/>
        <end position="49"/>
    </location>
</feature>
<feature type="region of interest" description="Globular core" evidence="1">
    <location>
        <begin position="76"/>
        <end position="171"/>
    </location>
</feature>
<feature type="region of interest" description="Binding to the phosphoprotein" evidence="1">
    <location>
        <begin position="126"/>
        <end position="163"/>
    </location>
</feature>
<feature type="region of interest" description="Disordered" evidence="1">
    <location>
        <begin position="172"/>
        <end position="194"/>
    </location>
</feature>
<feature type="site" description="Involved in RNA-binding" evidence="1">
    <location>
        <position position="8"/>
    </location>
</feature>
<feature type="site" description="Involved in RNA-binding" evidence="1">
    <location>
        <position position="9"/>
    </location>
</feature>
<feature type="site" description="Involved in RNA-binding" evidence="1">
    <location>
        <position position="92"/>
    </location>
</feature>
<feature type="site" description="Involved in RNA-binding" evidence="1">
    <location>
        <position position="151"/>
    </location>
</feature>
<feature type="modified residue" description="Phosphoserine; by host" evidence="1">
    <location>
        <position position="58"/>
    </location>
</feature>
<feature type="modified residue" description="Phosphoserine; by host" evidence="1">
    <location>
        <position position="61"/>
    </location>
</feature>
<proteinExistence type="inferred from homology"/>
<organismHost>
    <name type="scientific">Homo sapiens</name>
    <name type="common">Human</name>
    <dbReference type="NCBI Taxonomy" id="9606"/>
</organismHost>
<protein>
    <recommendedName>
        <fullName>Protein M2-1</fullName>
    </recommendedName>
    <alternativeName>
        <fullName>Envelope-associated 22 kDa protein</fullName>
    </alternativeName>
    <alternativeName>
        <fullName>Transcription antitermination factor M2-1</fullName>
    </alternativeName>
</protein>